<proteinExistence type="inferred from homology"/>
<gene>
    <name evidence="1" type="primary">tyrS</name>
    <name type="ordered locus">EcSMS35_1562</name>
</gene>
<sequence length="424" mass="47527">MASSNLIKQLQERGLVAQVTDEEALAERLAQGPIALYCGFDPTADSLHLGHLVPLLCLKRFQQAGHKPVALVGGATGLIGDPSFKAAERKLNTEETVQEWVDKIRKQVAPFLDFDCGENSAIAANNYDWFGNMNVLTFLRDIGKHFSVNQMINKEAVKQRLNREDQGISFTEFSYNLLQGYDFACLNKQYGVVLQIGGSDQWGNITSGIDLTRRLHQNQVFGLTVPLITKADGTKFGKTEGGAVWLDPKKTSPYKFYQFWINTADADVYRFLKFFTFMSIEEINALEEEDKNSGKAPRAQYVLAEQVTRLVHGEEGLQAAKRITECLFSGSLSALSEADFEQLAQDGVPMVEMEKGADLMQALVDSELQPSRGQARKTIASNAITINGEKQSDPEYFFKEEDRLFGRFTLLRRGKKNYCLICWK</sequence>
<reference key="1">
    <citation type="journal article" date="2008" name="J. Bacteriol.">
        <title>Insights into the environmental resistance gene pool from the genome sequence of the multidrug-resistant environmental isolate Escherichia coli SMS-3-5.</title>
        <authorList>
            <person name="Fricke W.F."/>
            <person name="Wright M.S."/>
            <person name="Lindell A.H."/>
            <person name="Harkins D.M."/>
            <person name="Baker-Austin C."/>
            <person name="Ravel J."/>
            <person name="Stepanauskas R."/>
        </authorList>
    </citation>
    <scope>NUCLEOTIDE SEQUENCE [LARGE SCALE GENOMIC DNA]</scope>
    <source>
        <strain>SMS-3-5 / SECEC</strain>
    </source>
</reference>
<evidence type="ECO:0000255" key="1">
    <source>
        <dbReference type="HAMAP-Rule" id="MF_02006"/>
    </source>
</evidence>
<name>SYY_ECOSM</name>
<keyword id="KW-0007">Acetylation</keyword>
<keyword id="KW-0030">Aminoacyl-tRNA synthetase</keyword>
<keyword id="KW-0067">ATP-binding</keyword>
<keyword id="KW-0963">Cytoplasm</keyword>
<keyword id="KW-0436">Ligase</keyword>
<keyword id="KW-0547">Nucleotide-binding</keyword>
<keyword id="KW-0648">Protein biosynthesis</keyword>
<keyword id="KW-0694">RNA-binding</keyword>
<protein>
    <recommendedName>
        <fullName evidence="1">Tyrosine--tRNA ligase</fullName>
        <ecNumber evidence="1">6.1.1.1</ecNumber>
    </recommendedName>
    <alternativeName>
        <fullName evidence="1">Tyrosyl-tRNA synthetase</fullName>
        <shortName evidence="1">TyrRS</shortName>
    </alternativeName>
</protein>
<dbReference type="EC" id="6.1.1.1" evidence="1"/>
<dbReference type="EMBL" id="CP000970">
    <property type="protein sequence ID" value="ACB19814.1"/>
    <property type="molecule type" value="Genomic_DNA"/>
</dbReference>
<dbReference type="RefSeq" id="WP_001295400.1">
    <property type="nucleotide sequence ID" value="NC_010498.1"/>
</dbReference>
<dbReference type="SMR" id="B1LEP9"/>
<dbReference type="GeneID" id="93775791"/>
<dbReference type="KEGG" id="ecm:EcSMS35_1562"/>
<dbReference type="HOGENOM" id="CLU_024003_0_3_6"/>
<dbReference type="Proteomes" id="UP000007011">
    <property type="component" value="Chromosome"/>
</dbReference>
<dbReference type="GO" id="GO:0005829">
    <property type="term" value="C:cytosol"/>
    <property type="evidence" value="ECO:0007669"/>
    <property type="project" value="TreeGrafter"/>
</dbReference>
<dbReference type="GO" id="GO:0005524">
    <property type="term" value="F:ATP binding"/>
    <property type="evidence" value="ECO:0007669"/>
    <property type="project" value="UniProtKB-UniRule"/>
</dbReference>
<dbReference type="GO" id="GO:0003723">
    <property type="term" value="F:RNA binding"/>
    <property type="evidence" value="ECO:0007669"/>
    <property type="project" value="UniProtKB-KW"/>
</dbReference>
<dbReference type="GO" id="GO:0004831">
    <property type="term" value="F:tyrosine-tRNA ligase activity"/>
    <property type="evidence" value="ECO:0007669"/>
    <property type="project" value="UniProtKB-UniRule"/>
</dbReference>
<dbReference type="GO" id="GO:0006437">
    <property type="term" value="P:tyrosyl-tRNA aminoacylation"/>
    <property type="evidence" value="ECO:0007669"/>
    <property type="project" value="UniProtKB-UniRule"/>
</dbReference>
<dbReference type="CDD" id="cd00165">
    <property type="entry name" value="S4"/>
    <property type="match status" value="1"/>
</dbReference>
<dbReference type="CDD" id="cd00805">
    <property type="entry name" value="TyrRS_core"/>
    <property type="match status" value="1"/>
</dbReference>
<dbReference type="FunFam" id="1.10.240.10:FF:000001">
    <property type="entry name" value="Tyrosine--tRNA ligase"/>
    <property type="match status" value="1"/>
</dbReference>
<dbReference type="FunFam" id="3.10.290.10:FF:000007">
    <property type="entry name" value="Tyrosine--tRNA ligase"/>
    <property type="match status" value="1"/>
</dbReference>
<dbReference type="FunFam" id="3.40.50.620:FF:000008">
    <property type="entry name" value="Tyrosine--tRNA ligase"/>
    <property type="match status" value="1"/>
</dbReference>
<dbReference type="Gene3D" id="3.40.50.620">
    <property type="entry name" value="HUPs"/>
    <property type="match status" value="1"/>
</dbReference>
<dbReference type="Gene3D" id="3.10.290.10">
    <property type="entry name" value="RNA-binding S4 domain"/>
    <property type="match status" value="1"/>
</dbReference>
<dbReference type="Gene3D" id="1.10.240.10">
    <property type="entry name" value="Tyrosyl-Transfer RNA Synthetase"/>
    <property type="match status" value="1"/>
</dbReference>
<dbReference type="HAMAP" id="MF_02006">
    <property type="entry name" value="Tyr_tRNA_synth_type1"/>
    <property type="match status" value="1"/>
</dbReference>
<dbReference type="InterPro" id="IPR001412">
    <property type="entry name" value="aa-tRNA-synth_I_CS"/>
</dbReference>
<dbReference type="InterPro" id="IPR002305">
    <property type="entry name" value="aa-tRNA-synth_Ic"/>
</dbReference>
<dbReference type="InterPro" id="IPR014729">
    <property type="entry name" value="Rossmann-like_a/b/a_fold"/>
</dbReference>
<dbReference type="InterPro" id="IPR002942">
    <property type="entry name" value="S4_RNA-bd"/>
</dbReference>
<dbReference type="InterPro" id="IPR036986">
    <property type="entry name" value="S4_RNA-bd_sf"/>
</dbReference>
<dbReference type="InterPro" id="IPR054608">
    <property type="entry name" value="SYY-like_C"/>
</dbReference>
<dbReference type="InterPro" id="IPR002307">
    <property type="entry name" value="Tyr-tRNA-ligase"/>
</dbReference>
<dbReference type="InterPro" id="IPR024088">
    <property type="entry name" value="Tyr-tRNA-ligase_bac-type"/>
</dbReference>
<dbReference type="InterPro" id="IPR024107">
    <property type="entry name" value="Tyr-tRNA-ligase_bac_1"/>
</dbReference>
<dbReference type="NCBIfam" id="TIGR00234">
    <property type="entry name" value="tyrS"/>
    <property type="match status" value="1"/>
</dbReference>
<dbReference type="PANTHER" id="PTHR11766:SF0">
    <property type="entry name" value="TYROSINE--TRNA LIGASE, MITOCHONDRIAL"/>
    <property type="match status" value="1"/>
</dbReference>
<dbReference type="PANTHER" id="PTHR11766">
    <property type="entry name" value="TYROSYL-TRNA SYNTHETASE"/>
    <property type="match status" value="1"/>
</dbReference>
<dbReference type="Pfam" id="PF22421">
    <property type="entry name" value="SYY_C-terminal"/>
    <property type="match status" value="1"/>
</dbReference>
<dbReference type="Pfam" id="PF00579">
    <property type="entry name" value="tRNA-synt_1b"/>
    <property type="match status" value="1"/>
</dbReference>
<dbReference type="PRINTS" id="PR01040">
    <property type="entry name" value="TRNASYNTHTYR"/>
</dbReference>
<dbReference type="SMART" id="SM00363">
    <property type="entry name" value="S4"/>
    <property type="match status" value="1"/>
</dbReference>
<dbReference type="SUPFAM" id="SSF55174">
    <property type="entry name" value="Alpha-L RNA-binding motif"/>
    <property type="match status" value="1"/>
</dbReference>
<dbReference type="SUPFAM" id="SSF52374">
    <property type="entry name" value="Nucleotidylyl transferase"/>
    <property type="match status" value="1"/>
</dbReference>
<dbReference type="PROSITE" id="PS00178">
    <property type="entry name" value="AA_TRNA_LIGASE_I"/>
    <property type="match status" value="1"/>
</dbReference>
<dbReference type="PROSITE" id="PS50889">
    <property type="entry name" value="S4"/>
    <property type="match status" value="1"/>
</dbReference>
<accession>B1LEP9</accession>
<organism>
    <name type="scientific">Escherichia coli (strain SMS-3-5 / SECEC)</name>
    <dbReference type="NCBI Taxonomy" id="439855"/>
    <lineage>
        <taxon>Bacteria</taxon>
        <taxon>Pseudomonadati</taxon>
        <taxon>Pseudomonadota</taxon>
        <taxon>Gammaproteobacteria</taxon>
        <taxon>Enterobacterales</taxon>
        <taxon>Enterobacteriaceae</taxon>
        <taxon>Escherichia</taxon>
    </lineage>
</organism>
<comment type="function">
    <text evidence="1">Catalyzes the attachment of tyrosine to tRNA(Tyr) in a two-step reaction: tyrosine is first activated by ATP to form Tyr-AMP and then transferred to the acceptor end of tRNA(Tyr).</text>
</comment>
<comment type="catalytic activity">
    <reaction evidence="1">
        <text>tRNA(Tyr) + L-tyrosine + ATP = L-tyrosyl-tRNA(Tyr) + AMP + diphosphate + H(+)</text>
        <dbReference type="Rhea" id="RHEA:10220"/>
        <dbReference type="Rhea" id="RHEA-COMP:9706"/>
        <dbReference type="Rhea" id="RHEA-COMP:9707"/>
        <dbReference type="ChEBI" id="CHEBI:15378"/>
        <dbReference type="ChEBI" id="CHEBI:30616"/>
        <dbReference type="ChEBI" id="CHEBI:33019"/>
        <dbReference type="ChEBI" id="CHEBI:58315"/>
        <dbReference type="ChEBI" id="CHEBI:78442"/>
        <dbReference type="ChEBI" id="CHEBI:78536"/>
        <dbReference type="ChEBI" id="CHEBI:456215"/>
        <dbReference type="EC" id="6.1.1.1"/>
    </reaction>
</comment>
<comment type="subunit">
    <text evidence="1">Homodimer.</text>
</comment>
<comment type="subcellular location">
    <subcellularLocation>
        <location evidence="1">Cytoplasm</location>
    </subcellularLocation>
</comment>
<comment type="similarity">
    <text evidence="1">Belongs to the class-I aminoacyl-tRNA synthetase family. TyrS type 1 subfamily.</text>
</comment>
<feature type="chain" id="PRO_1000189297" description="Tyrosine--tRNA ligase">
    <location>
        <begin position="1"/>
        <end position="424"/>
    </location>
</feature>
<feature type="domain" description="S4 RNA-binding" evidence="1">
    <location>
        <begin position="357"/>
        <end position="414"/>
    </location>
</feature>
<feature type="short sequence motif" description="'HIGH' region">
    <location>
        <begin position="42"/>
        <end position="51"/>
    </location>
</feature>
<feature type="short sequence motif" description="'KMSKS' region">
    <location>
        <begin position="235"/>
        <end position="239"/>
    </location>
</feature>
<feature type="binding site" evidence="1">
    <location>
        <position position="37"/>
    </location>
    <ligand>
        <name>L-tyrosine</name>
        <dbReference type="ChEBI" id="CHEBI:58315"/>
    </ligand>
</feature>
<feature type="binding site" evidence="1">
    <location>
        <position position="175"/>
    </location>
    <ligand>
        <name>L-tyrosine</name>
        <dbReference type="ChEBI" id="CHEBI:58315"/>
    </ligand>
</feature>
<feature type="binding site" evidence="1">
    <location>
        <position position="179"/>
    </location>
    <ligand>
        <name>L-tyrosine</name>
        <dbReference type="ChEBI" id="CHEBI:58315"/>
    </ligand>
</feature>
<feature type="binding site" evidence="1">
    <location>
        <position position="238"/>
    </location>
    <ligand>
        <name>ATP</name>
        <dbReference type="ChEBI" id="CHEBI:30616"/>
    </ligand>
</feature>
<feature type="modified residue" description="N6-acetyllysine" evidence="1">
    <location>
        <position position="144"/>
    </location>
</feature>